<sequence>MRAPQMGSLGFLDKGHIPLVLQLLFLILFTGLLVAIIIQVSKMPSSEEIQWEHTKQEKMYKDLSQLKSEVDRLCRLCPWDWTFFNGNCYFFSKSQRDWHDSMTACKEMGAQLVIIKSHEEQSFLQQTSKKNSYTWMGLSDLNKEGEWYWLDGSPLSDSFEKYWKKGQPNNVGGQDCVEFRDNGWNDAKCEQRKFWICKKIATTCLSKW</sequence>
<comment type="function">
    <text>Putative pathogen-recognition receptor. May mediate the endocytosis of pathogens which are subsequently degraded in lysosomal compartments.</text>
</comment>
<comment type="subcellular location">
    <subcellularLocation>
        <location evidence="3">Membrane</location>
        <topology evidence="3">Single-pass type II membrane protein</topology>
    </subcellularLocation>
</comment>
<comment type="caution">
    <text evidence="3">In mouse, 5 genes homologous to human CD209/DC-SIGN and CD209L/DC-SIGNR have been identified.</text>
</comment>
<comment type="online information" name="Functional Glycomics Gateway - Glycan Binding">
    <link uri="http://www.functionalglycomics.org/glycomics/GBPServlet?&amp;operationType=view&amp;cbpId=cbp_mou_Ctlect_164"/>
    <text>SIGNR4</text>
</comment>
<reference key="1">
    <citation type="journal article" date="2001" name="Int. Immunol.">
        <title>Five mouse homologues of the human dendritic cell C-type lectin, DC-SIGN.</title>
        <authorList>
            <person name="Park C.G."/>
            <person name="Takahara K."/>
            <person name="Umemoto E."/>
            <person name="Yashima Y."/>
            <person name="Matsubara K."/>
            <person name="Matsuda Y."/>
            <person name="Clausen B.E."/>
            <person name="Inaba K."/>
            <person name="Steinman R.M."/>
        </authorList>
    </citation>
    <scope>NUCLEOTIDE SEQUENCE [MRNA]</scope>
    <source>
        <strain>C57BL/6J</strain>
    </source>
</reference>
<reference key="2">
    <citation type="journal article" date="2005" name="Science">
        <title>The transcriptional landscape of the mammalian genome.</title>
        <authorList>
            <person name="Carninci P."/>
            <person name="Kasukawa T."/>
            <person name="Katayama S."/>
            <person name="Gough J."/>
            <person name="Frith M.C."/>
            <person name="Maeda N."/>
            <person name="Oyama R."/>
            <person name="Ravasi T."/>
            <person name="Lenhard B."/>
            <person name="Wells C."/>
            <person name="Kodzius R."/>
            <person name="Shimokawa K."/>
            <person name="Bajic V.B."/>
            <person name="Brenner S.E."/>
            <person name="Batalov S."/>
            <person name="Forrest A.R."/>
            <person name="Zavolan M."/>
            <person name="Davis M.J."/>
            <person name="Wilming L.G."/>
            <person name="Aidinis V."/>
            <person name="Allen J.E."/>
            <person name="Ambesi-Impiombato A."/>
            <person name="Apweiler R."/>
            <person name="Aturaliya R.N."/>
            <person name="Bailey T.L."/>
            <person name="Bansal M."/>
            <person name="Baxter L."/>
            <person name="Beisel K.W."/>
            <person name="Bersano T."/>
            <person name="Bono H."/>
            <person name="Chalk A.M."/>
            <person name="Chiu K.P."/>
            <person name="Choudhary V."/>
            <person name="Christoffels A."/>
            <person name="Clutterbuck D.R."/>
            <person name="Crowe M.L."/>
            <person name="Dalla E."/>
            <person name="Dalrymple B.P."/>
            <person name="de Bono B."/>
            <person name="Della Gatta G."/>
            <person name="di Bernardo D."/>
            <person name="Down T."/>
            <person name="Engstrom P."/>
            <person name="Fagiolini M."/>
            <person name="Faulkner G."/>
            <person name="Fletcher C.F."/>
            <person name="Fukushima T."/>
            <person name="Furuno M."/>
            <person name="Futaki S."/>
            <person name="Gariboldi M."/>
            <person name="Georgii-Hemming P."/>
            <person name="Gingeras T.R."/>
            <person name="Gojobori T."/>
            <person name="Green R.E."/>
            <person name="Gustincich S."/>
            <person name="Harbers M."/>
            <person name="Hayashi Y."/>
            <person name="Hensch T.K."/>
            <person name="Hirokawa N."/>
            <person name="Hill D."/>
            <person name="Huminiecki L."/>
            <person name="Iacono M."/>
            <person name="Ikeo K."/>
            <person name="Iwama A."/>
            <person name="Ishikawa T."/>
            <person name="Jakt M."/>
            <person name="Kanapin A."/>
            <person name="Katoh M."/>
            <person name="Kawasawa Y."/>
            <person name="Kelso J."/>
            <person name="Kitamura H."/>
            <person name="Kitano H."/>
            <person name="Kollias G."/>
            <person name="Krishnan S.P."/>
            <person name="Kruger A."/>
            <person name="Kummerfeld S.K."/>
            <person name="Kurochkin I.V."/>
            <person name="Lareau L.F."/>
            <person name="Lazarevic D."/>
            <person name="Lipovich L."/>
            <person name="Liu J."/>
            <person name="Liuni S."/>
            <person name="McWilliam S."/>
            <person name="Madan Babu M."/>
            <person name="Madera M."/>
            <person name="Marchionni L."/>
            <person name="Matsuda H."/>
            <person name="Matsuzawa S."/>
            <person name="Miki H."/>
            <person name="Mignone F."/>
            <person name="Miyake S."/>
            <person name="Morris K."/>
            <person name="Mottagui-Tabar S."/>
            <person name="Mulder N."/>
            <person name="Nakano N."/>
            <person name="Nakauchi H."/>
            <person name="Ng P."/>
            <person name="Nilsson R."/>
            <person name="Nishiguchi S."/>
            <person name="Nishikawa S."/>
            <person name="Nori F."/>
            <person name="Ohara O."/>
            <person name="Okazaki Y."/>
            <person name="Orlando V."/>
            <person name="Pang K.C."/>
            <person name="Pavan W.J."/>
            <person name="Pavesi G."/>
            <person name="Pesole G."/>
            <person name="Petrovsky N."/>
            <person name="Piazza S."/>
            <person name="Reed J."/>
            <person name="Reid J.F."/>
            <person name="Ring B.Z."/>
            <person name="Ringwald M."/>
            <person name="Rost B."/>
            <person name="Ruan Y."/>
            <person name="Salzberg S.L."/>
            <person name="Sandelin A."/>
            <person name="Schneider C."/>
            <person name="Schoenbach C."/>
            <person name="Sekiguchi K."/>
            <person name="Semple C.A."/>
            <person name="Seno S."/>
            <person name="Sessa L."/>
            <person name="Sheng Y."/>
            <person name="Shibata Y."/>
            <person name="Shimada H."/>
            <person name="Shimada K."/>
            <person name="Silva D."/>
            <person name="Sinclair B."/>
            <person name="Sperling S."/>
            <person name="Stupka E."/>
            <person name="Sugiura K."/>
            <person name="Sultana R."/>
            <person name="Takenaka Y."/>
            <person name="Taki K."/>
            <person name="Tammoja K."/>
            <person name="Tan S.L."/>
            <person name="Tang S."/>
            <person name="Taylor M.S."/>
            <person name="Tegner J."/>
            <person name="Teichmann S.A."/>
            <person name="Ueda H.R."/>
            <person name="van Nimwegen E."/>
            <person name="Verardo R."/>
            <person name="Wei C.L."/>
            <person name="Yagi K."/>
            <person name="Yamanishi H."/>
            <person name="Zabarovsky E."/>
            <person name="Zhu S."/>
            <person name="Zimmer A."/>
            <person name="Hide W."/>
            <person name="Bult C."/>
            <person name="Grimmond S.M."/>
            <person name="Teasdale R.D."/>
            <person name="Liu E.T."/>
            <person name="Brusic V."/>
            <person name="Quackenbush J."/>
            <person name="Wahlestedt C."/>
            <person name="Mattick J.S."/>
            <person name="Hume D.A."/>
            <person name="Kai C."/>
            <person name="Sasaki D."/>
            <person name="Tomaru Y."/>
            <person name="Fukuda S."/>
            <person name="Kanamori-Katayama M."/>
            <person name="Suzuki M."/>
            <person name="Aoki J."/>
            <person name="Arakawa T."/>
            <person name="Iida J."/>
            <person name="Imamura K."/>
            <person name="Itoh M."/>
            <person name="Kato T."/>
            <person name="Kawaji H."/>
            <person name="Kawagashira N."/>
            <person name="Kawashima T."/>
            <person name="Kojima M."/>
            <person name="Kondo S."/>
            <person name="Konno H."/>
            <person name="Nakano K."/>
            <person name="Ninomiya N."/>
            <person name="Nishio T."/>
            <person name="Okada M."/>
            <person name="Plessy C."/>
            <person name="Shibata K."/>
            <person name="Shiraki T."/>
            <person name="Suzuki S."/>
            <person name="Tagami M."/>
            <person name="Waki K."/>
            <person name="Watahiki A."/>
            <person name="Okamura-Oho Y."/>
            <person name="Suzuki H."/>
            <person name="Kawai J."/>
            <person name="Hayashizaki Y."/>
        </authorList>
    </citation>
    <scope>NUCLEOTIDE SEQUENCE [LARGE SCALE MRNA]</scope>
    <source>
        <strain>C57BL/6J</strain>
        <tissue>Aorta</tissue>
        <tissue>Vein</tissue>
    </source>
</reference>
<dbReference type="EMBL" id="AF373412">
    <property type="protein sequence ID" value="AAL13238.1"/>
    <property type="molecule type" value="mRNA"/>
</dbReference>
<dbReference type="EMBL" id="AK040917">
    <property type="protein sequence ID" value="BAC30744.1"/>
    <property type="molecule type" value="mRNA"/>
</dbReference>
<dbReference type="CCDS" id="CCDS22074.1"/>
<dbReference type="RefSeq" id="NP_570975.1">
    <property type="nucleotide sequence ID" value="NM_130905.2"/>
</dbReference>
<dbReference type="SMR" id="Q91ZW7"/>
<dbReference type="FunCoup" id="Q91ZW7">
    <property type="interactions" value="336"/>
</dbReference>
<dbReference type="STRING" id="10090.ENSMUSP00000033888"/>
<dbReference type="PaxDb" id="10090-ENSMUSP00000033888"/>
<dbReference type="ProteomicsDB" id="281709"/>
<dbReference type="DNASU" id="170780"/>
<dbReference type="Ensembl" id="ENSMUST00000033888.5">
    <property type="protein sequence ID" value="ENSMUSP00000033888.5"/>
    <property type="gene ID" value="ENSMUSG00000040197.5"/>
</dbReference>
<dbReference type="GeneID" id="170780"/>
<dbReference type="KEGG" id="mmu:170780"/>
<dbReference type="UCSC" id="uc009kss.1">
    <property type="organism name" value="mouse"/>
</dbReference>
<dbReference type="AGR" id="MGI:2157948"/>
<dbReference type="CTD" id="170780"/>
<dbReference type="MGI" id="MGI:2157948">
    <property type="gene designation" value="Cd209e"/>
</dbReference>
<dbReference type="VEuPathDB" id="HostDB:ENSMUSG00000040197"/>
<dbReference type="eggNOG" id="KOG4297">
    <property type="taxonomic scope" value="Eukaryota"/>
</dbReference>
<dbReference type="GeneTree" id="ENSGT00940000155012"/>
<dbReference type="HOGENOM" id="CLU_049894_7_3_1"/>
<dbReference type="InParanoid" id="Q91ZW7"/>
<dbReference type="OMA" id="GQDCVEF"/>
<dbReference type="OrthoDB" id="8950604at2759"/>
<dbReference type="PhylomeDB" id="Q91ZW7"/>
<dbReference type="TreeFam" id="TF333341"/>
<dbReference type="BioGRID-ORCS" id="170780">
    <property type="hits" value="2 hits in 77 CRISPR screens"/>
</dbReference>
<dbReference type="PRO" id="PR:Q91ZW7"/>
<dbReference type="Proteomes" id="UP000000589">
    <property type="component" value="Chromosome 8"/>
</dbReference>
<dbReference type="RNAct" id="Q91ZW7">
    <property type="molecule type" value="protein"/>
</dbReference>
<dbReference type="Bgee" id="ENSMUSG00000040197">
    <property type="expression patterns" value="Expressed in blastoderm cell in morula and 14 other cell types or tissues"/>
</dbReference>
<dbReference type="ExpressionAtlas" id="Q91ZW7">
    <property type="expression patterns" value="baseline and differential"/>
</dbReference>
<dbReference type="GO" id="GO:0016020">
    <property type="term" value="C:membrane"/>
    <property type="evidence" value="ECO:0000250"/>
    <property type="project" value="MGI"/>
</dbReference>
<dbReference type="GO" id="GO:0005537">
    <property type="term" value="F:D-mannose binding"/>
    <property type="evidence" value="ECO:0000314"/>
    <property type="project" value="MGI"/>
</dbReference>
<dbReference type="GO" id="GO:0006897">
    <property type="term" value="P:endocytosis"/>
    <property type="evidence" value="ECO:0007669"/>
    <property type="project" value="UniProtKB-KW"/>
</dbReference>
<dbReference type="CDD" id="cd03590">
    <property type="entry name" value="CLECT_DC-SIGN_like"/>
    <property type="match status" value="1"/>
</dbReference>
<dbReference type="FunFam" id="3.10.100.10:FF:000044">
    <property type="entry name" value="CD209 antigen, isoform CRA_b"/>
    <property type="match status" value="1"/>
</dbReference>
<dbReference type="Gene3D" id="3.10.100.10">
    <property type="entry name" value="Mannose-Binding Protein A, subunit A"/>
    <property type="match status" value="1"/>
</dbReference>
<dbReference type="InterPro" id="IPR001304">
    <property type="entry name" value="C-type_lectin-like"/>
</dbReference>
<dbReference type="InterPro" id="IPR016186">
    <property type="entry name" value="C-type_lectin-like/link_sf"/>
</dbReference>
<dbReference type="InterPro" id="IPR018378">
    <property type="entry name" value="C-type_lectin_CS"/>
</dbReference>
<dbReference type="InterPro" id="IPR051379">
    <property type="entry name" value="C-type_Lectin_Receptor_IMM"/>
</dbReference>
<dbReference type="InterPro" id="IPR033989">
    <property type="entry name" value="CD209-like_CTLD"/>
</dbReference>
<dbReference type="InterPro" id="IPR016187">
    <property type="entry name" value="CTDL_fold"/>
</dbReference>
<dbReference type="PANTHER" id="PTHR46746:SF9">
    <property type="entry name" value="CD209 ANTIGEN-LIKE PROTEIN C-LIKE"/>
    <property type="match status" value="1"/>
</dbReference>
<dbReference type="PANTHER" id="PTHR46746">
    <property type="entry name" value="KILLER CELL LECTIN-LIKE RECEPTOR SUBFAMILY F MEMBER 2"/>
    <property type="match status" value="1"/>
</dbReference>
<dbReference type="Pfam" id="PF00059">
    <property type="entry name" value="Lectin_C"/>
    <property type="match status" value="1"/>
</dbReference>
<dbReference type="SMART" id="SM00034">
    <property type="entry name" value="CLECT"/>
    <property type="match status" value="1"/>
</dbReference>
<dbReference type="SUPFAM" id="SSF56436">
    <property type="entry name" value="C-type lectin-like"/>
    <property type="match status" value="1"/>
</dbReference>
<dbReference type="PROSITE" id="PS00615">
    <property type="entry name" value="C_TYPE_LECTIN_1"/>
    <property type="match status" value="1"/>
</dbReference>
<dbReference type="PROSITE" id="PS50041">
    <property type="entry name" value="C_TYPE_LECTIN_2"/>
    <property type="match status" value="1"/>
</dbReference>
<feature type="chain" id="PRO_0000046608" description="CD209 antigen-like protein E">
    <location>
        <begin position="1"/>
        <end position="208"/>
    </location>
</feature>
<feature type="topological domain" description="Cytoplasmic" evidence="1">
    <location>
        <begin position="1"/>
        <end position="16"/>
    </location>
</feature>
<feature type="transmembrane region" description="Helical; Signal-anchor for type II membrane protein" evidence="1">
    <location>
        <begin position="17"/>
        <end position="37"/>
    </location>
</feature>
<feature type="topological domain" description="Extracellular" evidence="1">
    <location>
        <begin position="38"/>
        <end position="208"/>
    </location>
</feature>
<feature type="domain" description="C-type lectin" evidence="2">
    <location>
        <begin position="83"/>
        <end position="198"/>
    </location>
</feature>
<feature type="disulfide bond" evidence="2">
    <location>
        <begin position="77"/>
        <end position="88"/>
    </location>
</feature>
<feature type="disulfide bond" evidence="2">
    <location>
        <begin position="105"/>
        <end position="197"/>
    </location>
</feature>
<feature type="disulfide bond" evidence="2">
    <location>
        <begin position="176"/>
        <end position="189"/>
    </location>
</feature>
<organism>
    <name type="scientific">Mus musculus</name>
    <name type="common">Mouse</name>
    <dbReference type="NCBI Taxonomy" id="10090"/>
    <lineage>
        <taxon>Eukaryota</taxon>
        <taxon>Metazoa</taxon>
        <taxon>Chordata</taxon>
        <taxon>Craniata</taxon>
        <taxon>Vertebrata</taxon>
        <taxon>Euteleostomi</taxon>
        <taxon>Mammalia</taxon>
        <taxon>Eutheria</taxon>
        <taxon>Euarchontoglires</taxon>
        <taxon>Glires</taxon>
        <taxon>Rodentia</taxon>
        <taxon>Myomorpha</taxon>
        <taxon>Muroidea</taxon>
        <taxon>Muridae</taxon>
        <taxon>Murinae</taxon>
        <taxon>Mus</taxon>
        <taxon>Mus</taxon>
    </lineage>
</organism>
<proteinExistence type="evidence at transcript level"/>
<evidence type="ECO:0000255" key="1"/>
<evidence type="ECO:0000255" key="2">
    <source>
        <dbReference type="PROSITE-ProRule" id="PRU00040"/>
    </source>
</evidence>
<evidence type="ECO:0000305" key="3"/>
<accession>Q91ZW7</accession>
<protein>
    <recommendedName>
        <fullName>CD209 antigen-like protein E</fullName>
    </recommendedName>
    <alternativeName>
        <fullName>DC-SIGN-related protein 4</fullName>
        <shortName>DC-SIGNR4</shortName>
    </alternativeName>
    <cdAntigenName>CD209</cdAntigenName>
</protein>
<name>C209E_MOUSE</name>
<keyword id="KW-1015">Disulfide bond</keyword>
<keyword id="KW-0254">Endocytosis</keyword>
<keyword id="KW-0430">Lectin</keyword>
<keyword id="KW-0472">Membrane</keyword>
<keyword id="KW-0675">Receptor</keyword>
<keyword id="KW-1185">Reference proteome</keyword>
<keyword id="KW-0735">Signal-anchor</keyword>
<keyword id="KW-0812">Transmembrane</keyword>
<keyword id="KW-1133">Transmembrane helix</keyword>
<gene>
    <name type="primary">Cd209e</name>
</gene>